<organism>
    <name type="scientific">Rattus norvegicus</name>
    <name type="common">Rat</name>
    <dbReference type="NCBI Taxonomy" id="10116"/>
    <lineage>
        <taxon>Eukaryota</taxon>
        <taxon>Metazoa</taxon>
        <taxon>Chordata</taxon>
        <taxon>Craniata</taxon>
        <taxon>Vertebrata</taxon>
        <taxon>Euteleostomi</taxon>
        <taxon>Mammalia</taxon>
        <taxon>Eutheria</taxon>
        <taxon>Euarchontoglires</taxon>
        <taxon>Glires</taxon>
        <taxon>Rodentia</taxon>
        <taxon>Myomorpha</taxon>
        <taxon>Muroidea</taxon>
        <taxon>Muridae</taxon>
        <taxon>Murinae</taxon>
        <taxon>Rattus</taxon>
    </lineage>
</organism>
<proteinExistence type="evidence at protein level"/>
<name>ICA1L_RAT</name>
<feature type="chain" id="PRO_0000076177" description="Islet cell autoantigen 1-like protein">
    <location>
        <begin position="1"/>
        <end position="435"/>
    </location>
</feature>
<feature type="domain" description="AH" evidence="1">
    <location>
        <begin position="44"/>
        <end position="247"/>
    </location>
</feature>
<feature type="region of interest" description="Disordered" evidence="2">
    <location>
        <begin position="391"/>
        <end position="435"/>
    </location>
</feature>
<feature type="compositionally biased region" description="Basic and acidic residues" evidence="2">
    <location>
        <begin position="426"/>
        <end position="435"/>
    </location>
</feature>
<accession>Q6RUG5</accession>
<protein>
    <recommendedName>
        <fullName>Islet cell autoantigen 1-like protein</fullName>
    </recommendedName>
    <alternativeName>
        <fullName>Amyotrophic lateral sclerosis 2 chromosomal region candidate gene 15 protein homolog</fullName>
    </alternativeName>
    <alternativeName>
        <fullName>Ica69-related protein</fullName>
    </alternativeName>
</protein>
<evidence type="ECO:0000255" key="1">
    <source>
        <dbReference type="PROSITE-ProRule" id="PRU00294"/>
    </source>
</evidence>
<evidence type="ECO:0000256" key="2">
    <source>
        <dbReference type="SAM" id="MobiDB-lite"/>
    </source>
</evidence>
<gene>
    <name type="primary">Ica1l</name>
    <name type="synonym">Als2cr15</name>
</gene>
<reference key="1">
    <citation type="journal article" date="2003" name="J. Biol. Chem.">
        <title>Islet cell autoantigen of 69 kDa is an arfaptin-related protein associated with the Golgi complex of insulinoma INS-1 cells.</title>
        <authorList>
            <person name="Spitzenberger F."/>
            <person name="Pietropaolo S."/>
            <person name="Verkade P."/>
            <person name="Habermann B."/>
            <person name="Lacas-Gervais S."/>
            <person name="Mziaut H."/>
            <person name="Pietropaolo M."/>
            <person name="Solimena M."/>
        </authorList>
    </citation>
    <scope>NUCLEOTIDE SEQUENCE [MRNA]</scope>
    <source>
        <strain>Sprague-Dawley</strain>
        <tissue>Brain</tissue>
    </source>
</reference>
<reference key="2">
    <citation type="journal article" date="2012" name="Nat. Commun.">
        <title>Quantitative maps of protein phosphorylation sites across 14 different rat organs and tissues.</title>
        <authorList>
            <person name="Lundby A."/>
            <person name="Secher A."/>
            <person name="Lage K."/>
            <person name="Nordsborg N.B."/>
            <person name="Dmytriyev A."/>
            <person name="Lundby C."/>
            <person name="Olsen J.V."/>
        </authorList>
    </citation>
    <scope>IDENTIFICATION BY MASS SPECTROMETRY [LARGE SCALE ANALYSIS]</scope>
</reference>
<keyword id="KW-1185">Reference proteome</keyword>
<dbReference type="EMBL" id="AY491990">
    <property type="protein sequence ID" value="AAR36901.1"/>
    <property type="molecule type" value="mRNA"/>
</dbReference>
<dbReference type="RefSeq" id="NP_955432.1">
    <property type="nucleotide sequence ID" value="NM_199400.2"/>
</dbReference>
<dbReference type="RefSeq" id="XP_063123279.1">
    <property type="nucleotide sequence ID" value="XM_063267209.1"/>
</dbReference>
<dbReference type="SMR" id="Q6RUG5"/>
<dbReference type="FunCoup" id="Q6RUG5">
    <property type="interactions" value="2380"/>
</dbReference>
<dbReference type="STRING" id="10116.ENSRNOP00000045103"/>
<dbReference type="iPTMnet" id="Q6RUG5"/>
<dbReference type="PhosphoSitePlus" id="Q6RUG5"/>
<dbReference type="PaxDb" id="10116-ENSRNOP00000045103"/>
<dbReference type="GeneID" id="316432"/>
<dbReference type="KEGG" id="rno:316432"/>
<dbReference type="UCSC" id="RGD:735110">
    <property type="organism name" value="rat"/>
</dbReference>
<dbReference type="AGR" id="RGD:735110"/>
<dbReference type="CTD" id="130026"/>
<dbReference type="RGD" id="735110">
    <property type="gene designation" value="Ica1l"/>
</dbReference>
<dbReference type="eggNOG" id="KOG3891">
    <property type="taxonomic scope" value="Eukaryota"/>
</dbReference>
<dbReference type="HOGENOM" id="CLU_037158_1_0_1"/>
<dbReference type="InParanoid" id="Q6RUG5"/>
<dbReference type="PhylomeDB" id="Q6RUG5"/>
<dbReference type="TreeFam" id="TF317186"/>
<dbReference type="PRO" id="PR:Q6RUG5"/>
<dbReference type="Proteomes" id="UP000002494">
    <property type="component" value="Unplaced"/>
</dbReference>
<dbReference type="GO" id="GO:0001669">
    <property type="term" value="C:acrosomal vesicle"/>
    <property type="evidence" value="ECO:0000266"/>
    <property type="project" value="RGD"/>
</dbReference>
<dbReference type="GO" id="GO:0005794">
    <property type="term" value="C:Golgi apparatus"/>
    <property type="evidence" value="ECO:0000318"/>
    <property type="project" value="GO_Central"/>
</dbReference>
<dbReference type="GO" id="GO:0019904">
    <property type="term" value="F:protein domain specific binding"/>
    <property type="evidence" value="ECO:0007669"/>
    <property type="project" value="InterPro"/>
</dbReference>
<dbReference type="GO" id="GO:0051049">
    <property type="term" value="P:regulation of transport"/>
    <property type="evidence" value="ECO:0000318"/>
    <property type="project" value="GO_Central"/>
</dbReference>
<dbReference type="GO" id="GO:0007286">
    <property type="term" value="P:spermatid development"/>
    <property type="evidence" value="ECO:0000266"/>
    <property type="project" value="RGD"/>
</dbReference>
<dbReference type="FunFam" id="1.20.1270.60:FF:000015">
    <property type="entry name" value="Islet cell autoantigen 1, 69kDa"/>
    <property type="match status" value="1"/>
</dbReference>
<dbReference type="Gene3D" id="1.20.1270.60">
    <property type="entry name" value="Arfaptin homology (AH) domain/BAR domain"/>
    <property type="match status" value="1"/>
</dbReference>
<dbReference type="InterPro" id="IPR027267">
    <property type="entry name" value="AH/BAR_dom_sf"/>
</dbReference>
<dbReference type="InterPro" id="IPR010504">
    <property type="entry name" value="AH_dom"/>
</dbReference>
<dbReference type="InterPro" id="IPR024114">
    <property type="entry name" value="Islet_autoAg_Ica1/Ica1-like"/>
</dbReference>
<dbReference type="InterPro" id="IPR006723">
    <property type="entry name" value="Islet_autoAg_Ica1_C"/>
</dbReference>
<dbReference type="PANTHER" id="PTHR10164">
    <property type="entry name" value="ISLET CELL AUTOANTIGEN 1"/>
    <property type="match status" value="1"/>
</dbReference>
<dbReference type="PANTHER" id="PTHR10164:SF5">
    <property type="entry name" value="ISLET CELL AUTOANTIGEN 1-LIKE PROTEIN"/>
    <property type="match status" value="1"/>
</dbReference>
<dbReference type="Pfam" id="PF06456">
    <property type="entry name" value="Arfaptin"/>
    <property type="match status" value="1"/>
</dbReference>
<dbReference type="Pfam" id="PF04629">
    <property type="entry name" value="ICA69"/>
    <property type="match status" value="1"/>
</dbReference>
<dbReference type="SMART" id="SM01015">
    <property type="entry name" value="Arfaptin"/>
    <property type="match status" value="1"/>
</dbReference>
<dbReference type="SMART" id="SM01237">
    <property type="entry name" value="ICA69"/>
    <property type="match status" value="1"/>
</dbReference>
<dbReference type="SUPFAM" id="SSF103657">
    <property type="entry name" value="BAR/IMD domain-like"/>
    <property type="match status" value="1"/>
</dbReference>
<dbReference type="PROSITE" id="PS50870">
    <property type="entry name" value="AH"/>
    <property type="match status" value="1"/>
</dbReference>
<sequence>MDSFEHLRPEDSQSVVSRMQKKYWKTKQVFIKATGKKEDEHVVASDAELDAKLEVFHSIQETCNELVKAVEKYQLRLNVISEEENELGLFLTFQAERDATQAGKMMGAAGKALCSSAKQRLALCTPLSRLKQEVATFSQRAISDTSVTINRMERARTEYRGALLWMKDASQELDPDTFKQVEKFRKVQIQVRNSKDCFDKLKMDVCQKVDLLGASRCNMLSHSLATYQRTLLGFWEKTAQMMSQIQEACAGFHPYDFMALKQLQDTPGNLTAEDKEEQTEGSCLSTNLNKVALSEEEERFEREPAVARALPRDSLEGDDFEKEFSFLSSLLSPTSSRASECTQECQPACGSPSLMCQEPSLGPGPLTSSSQFLPSRLFDLGLHADGAFNSWASQEGSEHSDTLPVPSQHPKKLKYLGPLSNPDAIGHSDDELLNA</sequence>